<dbReference type="EMBL" id="AK233610">
    <property type="status" value="NOT_ANNOTATED_CDS"/>
    <property type="molecule type" value="mRNA"/>
</dbReference>
<dbReference type="EMBL" id="CU928024">
    <property type="status" value="NOT_ANNOTATED_CDS"/>
    <property type="molecule type" value="Genomic_DNA"/>
</dbReference>
<dbReference type="EMBL" id="BK006293">
    <property type="protein sequence ID" value="DAA06089.1"/>
    <property type="molecule type" value="mRNA"/>
</dbReference>
<dbReference type="RefSeq" id="NP_001103895.1">
    <property type="nucleotide sequence ID" value="NM_001110425.1"/>
</dbReference>
<dbReference type="SMR" id="A8WH75"/>
<dbReference type="FunCoup" id="A8WH75">
    <property type="interactions" value="99"/>
</dbReference>
<dbReference type="STRING" id="9823.ENSSSCP00000039599"/>
<dbReference type="GlyCosmos" id="A8WH75">
    <property type="glycosylation" value="1 site, No reported glycans"/>
</dbReference>
<dbReference type="GlyGen" id="A8WH75">
    <property type="glycosylation" value="1 site"/>
</dbReference>
<dbReference type="PaxDb" id="9823-ENSSSCP00000029693"/>
<dbReference type="PeptideAtlas" id="A8WH75"/>
<dbReference type="Ensembl" id="ENSSSCT00070051588.1">
    <property type="protein sequence ID" value="ENSSSCP00070043630.1"/>
    <property type="gene ID" value="ENSSSCG00070025809.1"/>
</dbReference>
<dbReference type="Ensembl" id="ENSSSCT00090027458">
    <property type="protein sequence ID" value="ENSSSCP00090016968"/>
    <property type="gene ID" value="ENSSSCG00090015593"/>
</dbReference>
<dbReference type="Ensembl" id="ENSSSCT00115001899">
    <property type="protein sequence ID" value="ENSSSCP00115001762"/>
    <property type="gene ID" value="ENSSSCG00115001138"/>
</dbReference>
<dbReference type="Ensembl" id="ENSSSCT00130062375">
    <property type="protein sequence ID" value="ENSSSCP00130044670"/>
    <property type="gene ID" value="ENSSSCG00130031952"/>
</dbReference>
<dbReference type="GeneID" id="100126280"/>
<dbReference type="KEGG" id="ssc:100126280"/>
<dbReference type="CTD" id="9936"/>
<dbReference type="eggNOG" id="KOG4297">
    <property type="taxonomic scope" value="Eukaryota"/>
</dbReference>
<dbReference type="HOGENOM" id="CLU_088281_0_0_1"/>
<dbReference type="InParanoid" id="A8WH75"/>
<dbReference type="OMA" id="RWENVSC"/>
<dbReference type="OrthoDB" id="9945342at2759"/>
<dbReference type="Proteomes" id="UP000008227">
    <property type="component" value="Unplaced"/>
</dbReference>
<dbReference type="Proteomes" id="UP000314985">
    <property type="component" value="Chromosome 15"/>
</dbReference>
<dbReference type="Proteomes" id="UP000694570">
    <property type="component" value="Unplaced"/>
</dbReference>
<dbReference type="Proteomes" id="UP000694571">
    <property type="component" value="Unplaced"/>
</dbReference>
<dbReference type="Proteomes" id="UP000694720">
    <property type="component" value="Unplaced"/>
</dbReference>
<dbReference type="Proteomes" id="UP000694722">
    <property type="component" value="Unplaced"/>
</dbReference>
<dbReference type="Proteomes" id="UP000694723">
    <property type="component" value="Unplaced"/>
</dbReference>
<dbReference type="Proteomes" id="UP000694724">
    <property type="component" value="Unplaced"/>
</dbReference>
<dbReference type="Proteomes" id="UP000694725">
    <property type="component" value="Unplaced"/>
</dbReference>
<dbReference type="Proteomes" id="UP000694726">
    <property type="component" value="Unplaced"/>
</dbReference>
<dbReference type="Proteomes" id="UP000694727">
    <property type="component" value="Unplaced"/>
</dbReference>
<dbReference type="Proteomes" id="UP000694728">
    <property type="component" value="Unplaced"/>
</dbReference>
<dbReference type="GO" id="GO:0005938">
    <property type="term" value="C:cell cortex"/>
    <property type="evidence" value="ECO:0007669"/>
    <property type="project" value="UniProtKB-SubCell"/>
</dbReference>
<dbReference type="GO" id="GO:0030175">
    <property type="term" value="C:filopodium"/>
    <property type="evidence" value="ECO:0007669"/>
    <property type="project" value="UniProtKB-SubCell"/>
</dbReference>
<dbReference type="GO" id="GO:0016020">
    <property type="term" value="C:membrane"/>
    <property type="evidence" value="ECO:0007669"/>
    <property type="project" value="UniProtKB-SubCell"/>
</dbReference>
<dbReference type="GO" id="GO:0030246">
    <property type="term" value="F:carbohydrate binding"/>
    <property type="evidence" value="ECO:0007669"/>
    <property type="project" value="UniProtKB-KW"/>
</dbReference>
<dbReference type="GO" id="GO:0038023">
    <property type="term" value="F:signaling receptor activity"/>
    <property type="evidence" value="ECO:0000318"/>
    <property type="project" value="GO_Central"/>
</dbReference>
<dbReference type="CDD" id="cd00037">
    <property type="entry name" value="CLECT"/>
    <property type="match status" value="1"/>
</dbReference>
<dbReference type="FunFam" id="3.10.100.10:FF:000082">
    <property type="entry name" value="CD302 antigen isoform X2"/>
    <property type="match status" value="1"/>
</dbReference>
<dbReference type="Gene3D" id="3.10.100.10">
    <property type="entry name" value="Mannose-Binding Protein A, subunit A"/>
    <property type="match status" value="1"/>
</dbReference>
<dbReference type="InterPro" id="IPR001304">
    <property type="entry name" value="C-type_lectin-like"/>
</dbReference>
<dbReference type="InterPro" id="IPR016186">
    <property type="entry name" value="C-type_lectin-like/link_sf"/>
</dbReference>
<dbReference type="InterPro" id="IPR050111">
    <property type="entry name" value="C-type_lectin/snaclec_domain"/>
</dbReference>
<dbReference type="InterPro" id="IPR016187">
    <property type="entry name" value="CTDL_fold"/>
</dbReference>
<dbReference type="PANTHER" id="PTHR22803">
    <property type="entry name" value="MANNOSE, PHOSPHOLIPASE, LECTIN RECEPTOR RELATED"/>
    <property type="match status" value="1"/>
</dbReference>
<dbReference type="Pfam" id="PF00059">
    <property type="entry name" value="Lectin_C"/>
    <property type="match status" value="1"/>
</dbReference>
<dbReference type="SMART" id="SM00034">
    <property type="entry name" value="CLECT"/>
    <property type="match status" value="1"/>
</dbReference>
<dbReference type="SUPFAM" id="SSF56436">
    <property type="entry name" value="C-type lectin-like"/>
    <property type="match status" value="1"/>
</dbReference>
<dbReference type="PROSITE" id="PS50041">
    <property type="entry name" value="C_TYPE_LECTIN_2"/>
    <property type="match status" value="1"/>
</dbReference>
<name>CD302_PIG</name>
<reference evidence="6" key="1">
    <citation type="journal article" date="2007" name="Nucleic Acids Res.">
        <title>PEDE (Pig EST Data Explorer) has been expanded into Pig Expression Data Explorer, including 10 147 porcine full-length cDNA sequences.</title>
        <authorList>
            <person name="Uenishi H."/>
            <person name="Eguchi-Ogawa T."/>
            <person name="Shinkai H."/>
            <person name="Okumura N."/>
            <person name="Suzuki K."/>
            <person name="Toki D."/>
            <person name="Hamasima N."/>
            <person name="Awata T."/>
        </authorList>
    </citation>
    <scope>NUCLEOTIDE SEQUENCE [LARGE SCALE MRNA]</scope>
    <source>
        <tissue evidence="6">Liver</tissue>
    </source>
</reference>
<reference key="2">
    <citation type="submission" date="2009-11" db="EMBL/GenBank/DDBJ databases">
        <authorList>
            <consortium name="Porcine genome sequencing project"/>
        </authorList>
    </citation>
    <scope>NUCLEOTIDE SEQUENCE [LARGE SCALE GENOMIC DNA]</scope>
</reference>
<reference evidence="6 7" key="3">
    <citation type="journal article" date="2007" name="J. Immunol.">
        <title>The novel endocytic and phagocytic C-Type lectin receptor DCL-1/CD302 on macrophages is colocalized with F-actin, suggesting a role in cell adhesion and migration.</title>
        <authorList>
            <person name="Kato M."/>
            <person name="Khan S."/>
            <person name="d'Aniello E."/>
            <person name="McDonald K.J."/>
            <person name="Hart D.N."/>
        </authorList>
    </citation>
    <scope>IDENTIFICATION</scope>
</reference>
<organism>
    <name type="scientific">Sus scrofa</name>
    <name type="common">Pig</name>
    <dbReference type="NCBI Taxonomy" id="9823"/>
    <lineage>
        <taxon>Eukaryota</taxon>
        <taxon>Metazoa</taxon>
        <taxon>Chordata</taxon>
        <taxon>Craniata</taxon>
        <taxon>Vertebrata</taxon>
        <taxon>Euteleostomi</taxon>
        <taxon>Mammalia</taxon>
        <taxon>Eutheria</taxon>
        <taxon>Laurasiatheria</taxon>
        <taxon>Artiodactyla</taxon>
        <taxon>Suina</taxon>
        <taxon>Suidae</taxon>
        <taxon>Sus</taxon>
    </lineage>
</organism>
<feature type="signal peptide" evidence="3">
    <location>
        <begin position="1"/>
        <end status="unknown"/>
    </location>
</feature>
<feature type="chain" id="PRO_0000413657" description="CD302 antigen" evidence="3">
    <location>
        <begin status="unknown"/>
        <end position="240"/>
    </location>
</feature>
<feature type="topological domain" description="Extracellular" evidence="3">
    <location>
        <begin status="unknown"/>
        <end position="176"/>
    </location>
</feature>
<feature type="transmembrane region" description="Helical" evidence="3">
    <location>
        <begin position="177"/>
        <end position="197"/>
    </location>
</feature>
<feature type="topological domain" description="Cytoplasmic" evidence="3">
    <location>
        <begin position="198"/>
        <end position="240"/>
    </location>
</feature>
<feature type="domain" description="C-type lectin" evidence="4">
    <location>
        <begin position="40"/>
        <end position="160"/>
    </location>
</feature>
<feature type="glycosylation site" description="N-linked (GlcNAc...) asparagine" evidence="3">
    <location>
        <position position="117"/>
    </location>
</feature>
<feature type="disulfide bond" evidence="1 4">
    <location>
        <begin position="136"/>
        <end position="151"/>
    </location>
</feature>
<sequence length="240" mass="26428">MARAAPPALLLPLLGLAAATAAAAAAAAAVGCPSSTWVQFQDSCYIFLQEAIKVESIEDVRNQCTDHGADMVSIHNEEENTFILETLKKQWKGPDDILLGMFFDTDDASFKWFDKSNMTFDKWSDQEDGEDLVDTCAFLHTKTGEWKKGNCEVSSVEGTLCKAAIPYEKKYLSDNHILISALVIASTVILTVLGAVIWFLYKRNLDSGFTTVFSTAPQSPFNDDCVLVVAEENEYAVQFD</sequence>
<evidence type="ECO:0000250" key="1">
    <source>
        <dbReference type="UniProtKB" id="Q5KU26"/>
    </source>
</evidence>
<evidence type="ECO:0000250" key="2">
    <source>
        <dbReference type="UniProtKB" id="Q8IX05"/>
    </source>
</evidence>
<evidence type="ECO:0000255" key="3"/>
<evidence type="ECO:0000255" key="4">
    <source>
        <dbReference type="PROSITE-ProRule" id="PRU00040"/>
    </source>
</evidence>
<evidence type="ECO:0000303" key="5">
    <source>
    </source>
</evidence>
<evidence type="ECO:0000305" key="6"/>
<evidence type="ECO:0000312" key="7">
    <source>
        <dbReference type="EMBL" id="DAA06089.1"/>
    </source>
</evidence>
<keyword id="KW-0966">Cell projection</keyword>
<keyword id="KW-0963">Cytoplasm</keyword>
<keyword id="KW-1015">Disulfide bond</keyword>
<keyword id="KW-0325">Glycoprotein</keyword>
<keyword id="KW-0430">Lectin</keyword>
<keyword id="KW-0472">Membrane</keyword>
<keyword id="KW-0675">Receptor</keyword>
<keyword id="KW-1185">Reference proteome</keyword>
<keyword id="KW-0732">Signal</keyword>
<keyword id="KW-0812">Transmembrane</keyword>
<keyword id="KW-1133">Transmembrane helix</keyword>
<gene>
    <name evidence="5" type="primary">CD302</name>
</gene>
<proteinExistence type="evidence at transcript level"/>
<accession>A8WH75</accession>
<protein>
    <recommendedName>
        <fullName evidence="2">CD302 antigen</fullName>
    </recommendedName>
    <alternativeName>
        <fullName evidence="5">Type I transmembrane C-type lectin receptor DCL-1</fullName>
    </alternativeName>
</protein>
<comment type="function">
    <text evidence="2">Potential multifunctional C-type lectin receptor that may play roles in endocytosis and phagocytosis as well as in cell adhesion and migration.</text>
</comment>
<comment type="subcellular location">
    <subcellularLocation>
        <location evidence="3">Membrane</location>
        <topology evidence="3">Single-pass type I membrane protein</topology>
    </subcellularLocation>
    <subcellularLocation>
        <location evidence="2 3">Cell projection</location>
        <location evidence="2 3">Filopodium</location>
    </subcellularLocation>
    <subcellularLocation>
        <location evidence="2 3">Cytoplasm</location>
        <location evidence="2 3">Cell cortex</location>
    </subcellularLocation>
    <text evidence="2 3">Colocalizes with F-actin in filopodia, cellular cortex and microvilli of the apical cell surface.</text>
</comment>